<organism>
    <name type="scientific">Wigglesworthia glossinidia brevipalpis</name>
    <dbReference type="NCBI Taxonomy" id="36870"/>
    <lineage>
        <taxon>Bacteria</taxon>
        <taxon>Pseudomonadati</taxon>
        <taxon>Pseudomonadota</taxon>
        <taxon>Gammaproteobacteria</taxon>
        <taxon>Enterobacterales</taxon>
        <taxon>Erwiniaceae</taxon>
        <taxon>Wigglesworthia</taxon>
    </lineage>
</organism>
<name>ACCA_WIGBR</name>
<comment type="function">
    <text evidence="1">Component of the acetyl coenzyme A carboxylase (ACC) complex. First, biotin carboxylase catalyzes the carboxylation of biotin on its carrier protein (BCCP) and then the CO(2) group is transferred by the carboxyltransferase to acetyl-CoA to form malonyl-CoA.</text>
</comment>
<comment type="catalytic activity">
    <reaction evidence="1">
        <text>N(6)-carboxybiotinyl-L-lysyl-[protein] + acetyl-CoA = N(6)-biotinyl-L-lysyl-[protein] + malonyl-CoA</text>
        <dbReference type="Rhea" id="RHEA:54728"/>
        <dbReference type="Rhea" id="RHEA-COMP:10505"/>
        <dbReference type="Rhea" id="RHEA-COMP:10506"/>
        <dbReference type="ChEBI" id="CHEBI:57288"/>
        <dbReference type="ChEBI" id="CHEBI:57384"/>
        <dbReference type="ChEBI" id="CHEBI:83144"/>
        <dbReference type="ChEBI" id="CHEBI:83145"/>
        <dbReference type="EC" id="2.1.3.15"/>
    </reaction>
</comment>
<comment type="pathway">
    <text evidence="1">Lipid metabolism; malonyl-CoA biosynthesis; malonyl-CoA from acetyl-CoA: step 1/1.</text>
</comment>
<comment type="subunit">
    <text evidence="1">Acetyl-CoA carboxylase is a heterohexamer composed of biotin carboxyl carrier protein (AccB), biotin carboxylase (AccC) and two subunits each of ACCase subunit alpha (AccA) and ACCase subunit beta (AccD).</text>
</comment>
<comment type="subcellular location">
    <subcellularLocation>
        <location evidence="1">Cytoplasm</location>
    </subcellularLocation>
</comment>
<comment type="similarity">
    <text evidence="1">Belongs to the AccA family.</text>
</comment>
<reference key="1">
    <citation type="journal article" date="2002" name="Nat. Genet.">
        <title>Genome sequence of the endocellular obligate symbiont of tsetse flies, Wigglesworthia glossinidia.</title>
        <authorList>
            <person name="Akman L."/>
            <person name="Yamashita A."/>
            <person name="Watanabe H."/>
            <person name="Oshima K."/>
            <person name="Shiba T."/>
            <person name="Hattori M."/>
            <person name="Aksoy S."/>
        </authorList>
    </citation>
    <scope>NUCLEOTIDE SEQUENCE [LARGE SCALE GENOMIC DNA]</scope>
</reference>
<feature type="chain" id="PRO_0000223852" description="Acetyl-coenzyme A carboxylase carboxyl transferase subunit alpha">
    <location>
        <begin position="1"/>
        <end position="317"/>
    </location>
</feature>
<feature type="domain" description="CoA carboxyltransferase C-terminal" evidence="2">
    <location>
        <begin position="33"/>
        <end position="294"/>
    </location>
</feature>
<accession>Q8D2H6</accession>
<protein>
    <recommendedName>
        <fullName evidence="1">Acetyl-coenzyme A carboxylase carboxyl transferase subunit alpha</fullName>
        <shortName evidence="1">ACCase subunit alpha</shortName>
        <shortName evidence="1">Acetyl-CoA carboxylase carboxyltransferase subunit alpha</shortName>
        <ecNumber evidence="1">2.1.3.15</ecNumber>
    </recommendedName>
</protein>
<dbReference type="EC" id="2.1.3.15" evidence="1"/>
<dbReference type="EMBL" id="BA000021">
    <property type="protein sequence ID" value="BAC24524.1"/>
    <property type="molecule type" value="Genomic_DNA"/>
</dbReference>
<dbReference type="SMR" id="Q8D2H6"/>
<dbReference type="STRING" id="36870.gene:10368878"/>
<dbReference type="KEGG" id="wbr:accA"/>
<dbReference type="eggNOG" id="COG0825">
    <property type="taxonomic scope" value="Bacteria"/>
</dbReference>
<dbReference type="HOGENOM" id="CLU_015486_0_2_6"/>
<dbReference type="OrthoDB" id="9808023at2"/>
<dbReference type="UniPathway" id="UPA00655">
    <property type="reaction ID" value="UER00711"/>
</dbReference>
<dbReference type="Proteomes" id="UP000000562">
    <property type="component" value="Chromosome"/>
</dbReference>
<dbReference type="GO" id="GO:0009317">
    <property type="term" value="C:acetyl-CoA carboxylase complex"/>
    <property type="evidence" value="ECO:0007669"/>
    <property type="project" value="InterPro"/>
</dbReference>
<dbReference type="GO" id="GO:0003989">
    <property type="term" value="F:acetyl-CoA carboxylase activity"/>
    <property type="evidence" value="ECO:0007669"/>
    <property type="project" value="InterPro"/>
</dbReference>
<dbReference type="GO" id="GO:0005524">
    <property type="term" value="F:ATP binding"/>
    <property type="evidence" value="ECO:0007669"/>
    <property type="project" value="UniProtKB-KW"/>
</dbReference>
<dbReference type="GO" id="GO:0016743">
    <property type="term" value="F:carboxyl- or carbamoyltransferase activity"/>
    <property type="evidence" value="ECO:0007669"/>
    <property type="project" value="UniProtKB-UniRule"/>
</dbReference>
<dbReference type="GO" id="GO:0006633">
    <property type="term" value="P:fatty acid biosynthetic process"/>
    <property type="evidence" value="ECO:0007669"/>
    <property type="project" value="UniProtKB-KW"/>
</dbReference>
<dbReference type="GO" id="GO:2001295">
    <property type="term" value="P:malonyl-CoA biosynthetic process"/>
    <property type="evidence" value="ECO:0007669"/>
    <property type="project" value="UniProtKB-UniRule"/>
</dbReference>
<dbReference type="FunFam" id="3.90.226.10:FF:000008">
    <property type="entry name" value="Acetyl-coenzyme A carboxylase carboxyl transferase subunit alpha"/>
    <property type="match status" value="1"/>
</dbReference>
<dbReference type="Gene3D" id="3.90.226.10">
    <property type="entry name" value="2-enoyl-CoA Hydratase, Chain A, domain 1"/>
    <property type="match status" value="1"/>
</dbReference>
<dbReference type="HAMAP" id="MF_00823">
    <property type="entry name" value="AcetylCoA_CT_alpha"/>
    <property type="match status" value="1"/>
</dbReference>
<dbReference type="InterPro" id="IPR001095">
    <property type="entry name" value="Acetyl_CoA_COase_a_su"/>
</dbReference>
<dbReference type="InterPro" id="IPR029045">
    <property type="entry name" value="ClpP/crotonase-like_dom_sf"/>
</dbReference>
<dbReference type="InterPro" id="IPR011763">
    <property type="entry name" value="COA_CT_C"/>
</dbReference>
<dbReference type="NCBIfam" id="TIGR00513">
    <property type="entry name" value="accA"/>
    <property type="match status" value="1"/>
</dbReference>
<dbReference type="NCBIfam" id="NF041504">
    <property type="entry name" value="AccA_sub"/>
    <property type="match status" value="1"/>
</dbReference>
<dbReference type="NCBIfam" id="NF004344">
    <property type="entry name" value="PRK05724.1"/>
    <property type="match status" value="1"/>
</dbReference>
<dbReference type="PANTHER" id="PTHR42853">
    <property type="entry name" value="ACETYL-COENZYME A CARBOXYLASE CARBOXYL TRANSFERASE SUBUNIT ALPHA"/>
    <property type="match status" value="1"/>
</dbReference>
<dbReference type="PANTHER" id="PTHR42853:SF3">
    <property type="entry name" value="ACETYL-COENZYME A CARBOXYLASE CARBOXYL TRANSFERASE SUBUNIT ALPHA, CHLOROPLASTIC"/>
    <property type="match status" value="1"/>
</dbReference>
<dbReference type="Pfam" id="PF03255">
    <property type="entry name" value="ACCA"/>
    <property type="match status" value="1"/>
</dbReference>
<dbReference type="PRINTS" id="PR01069">
    <property type="entry name" value="ACCCTRFRASEA"/>
</dbReference>
<dbReference type="SUPFAM" id="SSF52096">
    <property type="entry name" value="ClpP/crotonase"/>
    <property type="match status" value="1"/>
</dbReference>
<dbReference type="PROSITE" id="PS50989">
    <property type="entry name" value="COA_CT_CTER"/>
    <property type="match status" value="1"/>
</dbReference>
<proteinExistence type="inferred from homology"/>
<evidence type="ECO:0000255" key="1">
    <source>
        <dbReference type="HAMAP-Rule" id="MF_00823"/>
    </source>
</evidence>
<evidence type="ECO:0000255" key="2">
    <source>
        <dbReference type="PROSITE-ProRule" id="PRU01137"/>
    </source>
</evidence>
<sequence>MNLTFLDFEQPIADLESKINSLVELSQRDKTLNINKEINCLRKKSEDLTKKIFSNLNAWQITKIARHPMRPYALDYIKNIFTDFDELSGDRLYGDDKSIIGGIARLNSRPVMILGHQKGRETKEKIFRNFGMPTPEGYRKALRLMKIADRFNMPLITLIDTPGAYPGIEAEERGQASAIATNLREMSMLKIPIICTVIGEGGSGGALAIGVGDKINMMQYSIYSVISPEGCAAILWKNVDKAPIAAEEMGIIATRLKELNLIDNIIPEPLGGAHRNIKIITSNLKNRILKDLKELDKFTTSDLLNNRYKKLMSYGYN</sequence>
<gene>
    <name evidence="1" type="primary">accA</name>
    <name type="ordered locus">WIGBR3780</name>
</gene>
<keyword id="KW-0067">ATP-binding</keyword>
<keyword id="KW-0963">Cytoplasm</keyword>
<keyword id="KW-0275">Fatty acid biosynthesis</keyword>
<keyword id="KW-0276">Fatty acid metabolism</keyword>
<keyword id="KW-0444">Lipid biosynthesis</keyword>
<keyword id="KW-0443">Lipid metabolism</keyword>
<keyword id="KW-0547">Nucleotide-binding</keyword>
<keyword id="KW-1185">Reference proteome</keyword>
<keyword id="KW-0808">Transferase</keyword>